<gene>
    <name evidence="1" type="primary">surE</name>
    <name type="ordered locus">KPK_1017</name>
</gene>
<evidence type="ECO:0000255" key="1">
    <source>
        <dbReference type="HAMAP-Rule" id="MF_00060"/>
    </source>
</evidence>
<dbReference type="EC" id="3.1.3.5" evidence="1"/>
<dbReference type="EC" id="3.1.3.6" evidence="1"/>
<dbReference type="EC" id="3.6.1.11" evidence="1"/>
<dbReference type="EMBL" id="CP000964">
    <property type="protein sequence ID" value="ACI11010.1"/>
    <property type="molecule type" value="Genomic_DNA"/>
</dbReference>
<dbReference type="SMR" id="B5XV37"/>
<dbReference type="KEGG" id="kpe:KPK_1017"/>
<dbReference type="HOGENOM" id="CLU_045192_1_2_6"/>
<dbReference type="Proteomes" id="UP000001734">
    <property type="component" value="Chromosome"/>
</dbReference>
<dbReference type="GO" id="GO:0005737">
    <property type="term" value="C:cytoplasm"/>
    <property type="evidence" value="ECO:0007669"/>
    <property type="project" value="UniProtKB-SubCell"/>
</dbReference>
<dbReference type="GO" id="GO:0008254">
    <property type="term" value="F:3'-nucleotidase activity"/>
    <property type="evidence" value="ECO:0007669"/>
    <property type="project" value="UniProtKB-UniRule"/>
</dbReference>
<dbReference type="GO" id="GO:0008253">
    <property type="term" value="F:5'-nucleotidase activity"/>
    <property type="evidence" value="ECO:0007669"/>
    <property type="project" value="UniProtKB-UniRule"/>
</dbReference>
<dbReference type="GO" id="GO:0004309">
    <property type="term" value="F:exopolyphosphatase activity"/>
    <property type="evidence" value="ECO:0007669"/>
    <property type="project" value="UniProtKB-UniRule"/>
</dbReference>
<dbReference type="GO" id="GO:0046872">
    <property type="term" value="F:metal ion binding"/>
    <property type="evidence" value="ECO:0007669"/>
    <property type="project" value="UniProtKB-UniRule"/>
</dbReference>
<dbReference type="GO" id="GO:0000166">
    <property type="term" value="F:nucleotide binding"/>
    <property type="evidence" value="ECO:0007669"/>
    <property type="project" value="UniProtKB-KW"/>
</dbReference>
<dbReference type="FunFam" id="3.40.1210.10:FF:000001">
    <property type="entry name" value="5'/3'-nucleotidase SurE"/>
    <property type="match status" value="1"/>
</dbReference>
<dbReference type="Gene3D" id="3.40.1210.10">
    <property type="entry name" value="Survival protein SurE-like phosphatase/nucleotidase"/>
    <property type="match status" value="1"/>
</dbReference>
<dbReference type="HAMAP" id="MF_00060">
    <property type="entry name" value="SurE"/>
    <property type="match status" value="1"/>
</dbReference>
<dbReference type="InterPro" id="IPR030048">
    <property type="entry name" value="SurE"/>
</dbReference>
<dbReference type="InterPro" id="IPR002828">
    <property type="entry name" value="SurE-like_Pase/nucleotidase"/>
</dbReference>
<dbReference type="InterPro" id="IPR036523">
    <property type="entry name" value="SurE-like_sf"/>
</dbReference>
<dbReference type="NCBIfam" id="NF001488">
    <property type="entry name" value="PRK00346.1-1"/>
    <property type="match status" value="1"/>
</dbReference>
<dbReference type="NCBIfam" id="NF001489">
    <property type="entry name" value="PRK00346.1-3"/>
    <property type="match status" value="1"/>
</dbReference>
<dbReference type="NCBIfam" id="NF001490">
    <property type="entry name" value="PRK00346.1-4"/>
    <property type="match status" value="1"/>
</dbReference>
<dbReference type="NCBIfam" id="TIGR00087">
    <property type="entry name" value="surE"/>
    <property type="match status" value="1"/>
</dbReference>
<dbReference type="PANTHER" id="PTHR30457">
    <property type="entry name" value="5'-NUCLEOTIDASE SURE"/>
    <property type="match status" value="1"/>
</dbReference>
<dbReference type="PANTHER" id="PTHR30457:SF12">
    <property type="entry name" value="5'_3'-NUCLEOTIDASE SURE"/>
    <property type="match status" value="1"/>
</dbReference>
<dbReference type="Pfam" id="PF01975">
    <property type="entry name" value="SurE"/>
    <property type="match status" value="1"/>
</dbReference>
<dbReference type="SUPFAM" id="SSF64167">
    <property type="entry name" value="SurE-like"/>
    <property type="match status" value="1"/>
</dbReference>
<accession>B5XV37</accession>
<organism>
    <name type="scientific">Klebsiella pneumoniae (strain 342)</name>
    <dbReference type="NCBI Taxonomy" id="507522"/>
    <lineage>
        <taxon>Bacteria</taxon>
        <taxon>Pseudomonadati</taxon>
        <taxon>Pseudomonadota</taxon>
        <taxon>Gammaproteobacteria</taxon>
        <taxon>Enterobacterales</taxon>
        <taxon>Enterobacteriaceae</taxon>
        <taxon>Klebsiella/Raoultella group</taxon>
        <taxon>Klebsiella</taxon>
        <taxon>Klebsiella pneumoniae complex</taxon>
    </lineage>
</organism>
<protein>
    <recommendedName>
        <fullName evidence="1">5'/3'-nucleotidase SurE</fullName>
        <ecNumber evidence="1">3.1.3.5</ecNumber>
        <ecNumber evidence="1">3.1.3.6</ecNumber>
    </recommendedName>
    <alternativeName>
        <fullName evidence="1">Exopolyphosphatase</fullName>
        <ecNumber evidence="1">3.6.1.11</ecNumber>
    </alternativeName>
    <alternativeName>
        <fullName evidence="1">Nucleoside monophosphate phosphohydrolase</fullName>
    </alternativeName>
</protein>
<proteinExistence type="inferred from homology"/>
<comment type="function">
    <text evidence="1">Nucleotidase with a broad substrate specificity as it can dephosphorylate various ribo- and deoxyribonucleoside 5'-monophosphates and ribonucleoside 3'-monophosphates with highest affinity to 3'-AMP. Also hydrolyzes polyphosphate (exopolyphosphatase activity) with the preference for short-chain-length substrates (P20-25). Might be involved in the regulation of dNTP and NTP pools, and in the turnover of 3'-mononucleotides produced by numerous intracellular RNases (T1, T2, and F) during the degradation of various RNAs.</text>
</comment>
<comment type="catalytic activity">
    <reaction evidence="1">
        <text>a ribonucleoside 5'-phosphate + H2O = a ribonucleoside + phosphate</text>
        <dbReference type="Rhea" id="RHEA:12484"/>
        <dbReference type="ChEBI" id="CHEBI:15377"/>
        <dbReference type="ChEBI" id="CHEBI:18254"/>
        <dbReference type="ChEBI" id="CHEBI:43474"/>
        <dbReference type="ChEBI" id="CHEBI:58043"/>
        <dbReference type="EC" id="3.1.3.5"/>
    </reaction>
</comment>
<comment type="catalytic activity">
    <reaction evidence="1">
        <text>a ribonucleoside 3'-phosphate + H2O = a ribonucleoside + phosphate</text>
        <dbReference type="Rhea" id="RHEA:10144"/>
        <dbReference type="ChEBI" id="CHEBI:13197"/>
        <dbReference type="ChEBI" id="CHEBI:15377"/>
        <dbReference type="ChEBI" id="CHEBI:18254"/>
        <dbReference type="ChEBI" id="CHEBI:43474"/>
        <dbReference type="EC" id="3.1.3.6"/>
    </reaction>
</comment>
<comment type="catalytic activity">
    <reaction evidence="1">
        <text>[phosphate](n) + H2O = [phosphate](n-1) + phosphate + H(+)</text>
        <dbReference type="Rhea" id="RHEA:21528"/>
        <dbReference type="Rhea" id="RHEA-COMP:9859"/>
        <dbReference type="Rhea" id="RHEA-COMP:14279"/>
        <dbReference type="ChEBI" id="CHEBI:15377"/>
        <dbReference type="ChEBI" id="CHEBI:15378"/>
        <dbReference type="ChEBI" id="CHEBI:16838"/>
        <dbReference type="ChEBI" id="CHEBI:43474"/>
        <dbReference type="EC" id="3.6.1.11"/>
    </reaction>
</comment>
<comment type="cofactor">
    <cofactor evidence="1">
        <name>a divalent metal cation</name>
        <dbReference type="ChEBI" id="CHEBI:60240"/>
    </cofactor>
    <text evidence="1">Binds 1 divalent metal cation per subunit.</text>
</comment>
<comment type="subcellular location">
    <subcellularLocation>
        <location evidence="1">Cytoplasm</location>
    </subcellularLocation>
</comment>
<comment type="similarity">
    <text evidence="1">Belongs to the SurE nucleotidase family.</text>
</comment>
<name>SURE_KLEP3</name>
<sequence length="253" mass="27252">MRILLSNDDGIHAPGIQTLAKALREFAEVQVVAPDRNRSGASNSLTLESSLRTFTFENGDIAVQMGTPTDCVYLGVNALMRPRPDIVVSGINAGPNLGDDVIYSGTVAAAMEGRHLGFPALAVSLNGYQHYDTAAAVTCTILRALSREPLRTGRILNINVPDLPLDQIKGIRVTRCGNRHPADQVIPQKDPRGNTLYWIGPPGDKRDAGPGTDFAAVDEGYVSVTPLHVDLTAHQAHEVVSDWLERVGVDGQW</sequence>
<reference key="1">
    <citation type="journal article" date="2008" name="PLoS Genet.">
        <title>Complete genome sequence of the N2-fixing broad host range endophyte Klebsiella pneumoniae 342 and virulence predictions verified in mice.</title>
        <authorList>
            <person name="Fouts D.E."/>
            <person name="Tyler H.L."/>
            <person name="DeBoy R.T."/>
            <person name="Daugherty S."/>
            <person name="Ren Q."/>
            <person name="Badger J.H."/>
            <person name="Durkin A.S."/>
            <person name="Huot H."/>
            <person name="Shrivastava S."/>
            <person name="Kothari S."/>
            <person name="Dodson R.J."/>
            <person name="Mohamoud Y."/>
            <person name="Khouri H."/>
            <person name="Roesch L.F.W."/>
            <person name="Krogfelt K.A."/>
            <person name="Struve C."/>
            <person name="Triplett E.W."/>
            <person name="Methe B.A."/>
        </authorList>
    </citation>
    <scope>NUCLEOTIDE SEQUENCE [LARGE SCALE GENOMIC DNA]</scope>
    <source>
        <strain>342</strain>
    </source>
</reference>
<keyword id="KW-0963">Cytoplasm</keyword>
<keyword id="KW-0378">Hydrolase</keyword>
<keyword id="KW-0479">Metal-binding</keyword>
<keyword id="KW-0547">Nucleotide-binding</keyword>
<feature type="chain" id="PRO_1000092012" description="5'/3'-nucleotidase SurE">
    <location>
        <begin position="1"/>
        <end position="253"/>
    </location>
</feature>
<feature type="binding site" evidence="1">
    <location>
        <position position="8"/>
    </location>
    <ligand>
        <name>a divalent metal cation</name>
        <dbReference type="ChEBI" id="CHEBI:60240"/>
    </ligand>
</feature>
<feature type="binding site" evidence="1">
    <location>
        <position position="9"/>
    </location>
    <ligand>
        <name>a divalent metal cation</name>
        <dbReference type="ChEBI" id="CHEBI:60240"/>
    </ligand>
</feature>
<feature type="binding site" evidence="1">
    <location>
        <position position="39"/>
    </location>
    <ligand>
        <name>a divalent metal cation</name>
        <dbReference type="ChEBI" id="CHEBI:60240"/>
    </ligand>
</feature>
<feature type="binding site" evidence="1">
    <location>
        <position position="92"/>
    </location>
    <ligand>
        <name>a divalent metal cation</name>
        <dbReference type="ChEBI" id="CHEBI:60240"/>
    </ligand>
</feature>